<dbReference type="EMBL" id="AP009240">
    <property type="protein sequence ID" value="BAG75784.1"/>
    <property type="molecule type" value="Genomic_DNA"/>
</dbReference>
<dbReference type="RefSeq" id="WP_000174677.1">
    <property type="nucleotide sequence ID" value="NC_011415.1"/>
</dbReference>
<dbReference type="SMR" id="B6I020"/>
<dbReference type="GeneID" id="93777153"/>
<dbReference type="KEGG" id="ecy:ECSE_0260"/>
<dbReference type="HOGENOM" id="CLU_136773_0_0_6"/>
<dbReference type="Proteomes" id="UP000008199">
    <property type="component" value="Chromosome"/>
</dbReference>
<dbReference type="GO" id="GO:0005737">
    <property type="term" value="C:cytoplasm"/>
    <property type="evidence" value="ECO:0007669"/>
    <property type="project" value="UniProtKB-SubCell"/>
</dbReference>
<dbReference type="GO" id="GO:0045893">
    <property type="term" value="P:positive regulation of DNA-templated transcription"/>
    <property type="evidence" value="ECO:0007669"/>
    <property type="project" value="UniProtKB-UniRule"/>
</dbReference>
<dbReference type="FunFam" id="3.30.310.230:FF:000001">
    <property type="entry name" value="Sigma factor-binding protein Crl"/>
    <property type="match status" value="1"/>
</dbReference>
<dbReference type="Gene3D" id="3.30.310.230">
    <property type="entry name" value="Sigma factor-binding protein Crl monomer"/>
    <property type="match status" value="1"/>
</dbReference>
<dbReference type="HAMAP" id="MF_01178">
    <property type="entry name" value="Crl"/>
    <property type="match status" value="1"/>
</dbReference>
<dbReference type="InterPro" id="IPR009986">
    <property type="entry name" value="Tscrpt_reg_Crl"/>
</dbReference>
<dbReference type="InterPro" id="IPR038208">
    <property type="entry name" value="Tscrpt_reg_Crl_sf"/>
</dbReference>
<dbReference type="NCBIfam" id="NF008217">
    <property type="entry name" value="PRK10984.1"/>
    <property type="match status" value="1"/>
</dbReference>
<dbReference type="Pfam" id="PF07417">
    <property type="entry name" value="Crl"/>
    <property type="match status" value="1"/>
</dbReference>
<reference key="1">
    <citation type="journal article" date="2008" name="DNA Res.">
        <title>Complete genome sequence and comparative analysis of the wild-type commensal Escherichia coli strain SE11 isolated from a healthy adult.</title>
        <authorList>
            <person name="Oshima K."/>
            <person name="Toh H."/>
            <person name="Ogura Y."/>
            <person name="Sasamoto H."/>
            <person name="Morita H."/>
            <person name="Park S.-H."/>
            <person name="Ooka T."/>
            <person name="Iyoda S."/>
            <person name="Taylor T.D."/>
            <person name="Hayashi T."/>
            <person name="Itoh K."/>
            <person name="Hattori M."/>
        </authorList>
    </citation>
    <scope>NUCLEOTIDE SEQUENCE [LARGE SCALE GENOMIC DNA]</scope>
    <source>
        <strain>SE11</strain>
    </source>
</reference>
<protein>
    <recommendedName>
        <fullName evidence="1">Sigma factor-binding protein Crl</fullName>
    </recommendedName>
</protein>
<name>CRL_ECOSE</name>
<organism>
    <name type="scientific">Escherichia coli (strain SE11)</name>
    <dbReference type="NCBI Taxonomy" id="409438"/>
    <lineage>
        <taxon>Bacteria</taxon>
        <taxon>Pseudomonadati</taxon>
        <taxon>Pseudomonadota</taxon>
        <taxon>Gammaproteobacteria</taxon>
        <taxon>Enterobacterales</taxon>
        <taxon>Enterobacteriaceae</taxon>
        <taxon>Escherichia</taxon>
    </lineage>
</organism>
<gene>
    <name evidence="1" type="primary">crl</name>
    <name type="ordered locus">ECSE_0260</name>
</gene>
<accession>B6I020</accession>
<comment type="function">
    <text evidence="1">Binds to the sigma-S subunit of RNA polymerase, activating expression of sigma-S-regulated genes. Stimulates RNA polymerase holoenzyme formation and may bind to several other sigma factors, such as sigma-70 and sigma-32.</text>
</comment>
<comment type="subcellular location">
    <subcellularLocation>
        <location evidence="1">Cytoplasm</location>
    </subcellularLocation>
</comment>
<comment type="similarity">
    <text evidence="1">Belongs to the Crl family.</text>
</comment>
<feature type="chain" id="PRO_1000138140" description="Sigma factor-binding protein Crl">
    <location>
        <begin position="1"/>
        <end position="133"/>
    </location>
</feature>
<feature type="region of interest" description="Essential for activity" evidence="1">
    <location>
        <begin position="99"/>
        <end position="122"/>
    </location>
</feature>
<feature type="coiled-coil region" evidence="1">
    <location>
        <begin position="90"/>
        <end position="116"/>
    </location>
</feature>
<keyword id="KW-0010">Activator</keyword>
<keyword id="KW-0175">Coiled coil</keyword>
<keyword id="KW-0963">Cytoplasm</keyword>
<keyword id="KW-0804">Transcription</keyword>
<keyword id="KW-0805">Transcription regulation</keyword>
<sequence>MTLPSGHPKSRLIKKFTALGPYIREGKCEDNRFFFDCLAVCVNVKPAPEVREFWGWWMELEAQESRFTYSYQFGLFDKAGDWKSVPVKDTEVVERLEHTLREFHEKLRELLTTLNLKLEPADDFRDEPVKLTA</sequence>
<evidence type="ECO:0000255" key="1">
    <source>
        <dbReference type="HAMAP-Rule" id="MF_01178"/>
    </source>
</evidence>
<proteinExistence type="inferred from homology"/>